<sequence>MELKDYYAIMGVKPTDDLKTIKTAYRRLARKYHPDVSKEPDAEARFKEVAEAWEVLSDEQRRAEYDQLWQHRNDPQFNRQFQQHEGQPYNAEDFDDIFSSIFGQHGRHSHHRHAARGHDIEIEVAVFLEETLEEHQRTISYSVPVYNAFGLVEREIPKTLNVKIPAGVSNGQRIRLKGQGTPGENGGPNGDLWLVIHIAPHPLFDIVNQDLEVVLPLAPWEAALGAKVSVPTLKERILLTIPPGSQAGQRLRIKGKGLASKKHTGDLYAIIKIVMPPKPDEKTAALWQQLADAQSSFDPRQQWGKA</sequence>
<dbReference type="EMBL" id="FM200053">
    <property type="protein sequence ID" value="CAR59804.1"/>
    <property type="molecule type" value="Genomic_DNA"/>
</dbReference>
<dbReference type="RefSeq" id="WP_000420603.1">
    <property type="nucleotide sequence ID" value="NC_011147.1"/>
</dbReference>
<dbReference type="SMR" id="B5BBH2"/>
<dbReference type="KEGG" id="sek:SSPA1615"/>
<dbReference type="HOGENOM" id="CLU_017633_0_0_6"/>
<dbReference type="Proteomes" id="UP000001869">
    <property type="component" value="Chromosome"/>
</dbReference>
<dbReference type="GO" id="GO:0005737">
    <property type="term" value="C:cytoplasm"/>
    <property type="evidence" value="ECO:0007669"/>
    <property type="project" value="UniProtKB-UniRule"/>
</dbReference>
<dbReference type="GO" id="GO:0009295">
    <property type="term" value="C:nucleoid"/>
    <property type="evidence" value="ECO:0007669"/>
    <property type="project" value="UniProtKB-SubCell"/>
</dbReference>
<dbReference type="GO" id="GO:0003681">
    <property type="term" value="F:bent DNA binding"/>
    <property type="evidence" value="ECO:0007669"/>
    <property type="project" value="UniProtKB-UniRule"/>
</dbReference>
<dbReference type="GO" id="GO:0051082">
    <property type="term" value="F:unfolded protein binding"/>
    <property type="evidence" value="ECO:0007669"/>
    <property type="project" value="InterPro"/>
</dbReference>
<dbReference type="GO" id="GO:0051085">
    <property type="term" value="P:chaperone cofactor-dependent protein refolding"/>
    <property type="evidence" value="ECO:0007669"/>
    <property type="project" value="TreeGrafter"/>
</dbReference>
<dbReference type="GO" id="GO:0042026">
    <property type="term" value="P:protein refolding"/>
    <property type="evidence" value="ECO:0007669"/>
    <property type="project" value="TreeGrafter"/>
</dbReference>
<dbReference type="CDD" id="cd06257">
    <property type="entry name" value="DnaJ"/>
    <property type="match status" value="1"/>
</dbReference>
<dbReference type="CDD" id="cd10747">
    <property type="entry name" value="DnaJ_C"/>
    <property type="match status" value="1"/>
</dbReference>
<dbReference type="FunFam" id="1.10.287.110:FF:000013">
    <property type="entry name" value="Curved DNA-binding protein"/>
    <property type="match status" value="1"/>
</dbReference>
<dbReference type="FunFam" id="2.60.260.20:FF:000008">
    <property type="entry name" value="Curved DNA-binding protein"/>
    <property type="match status" value="1"/>
</dbReference>
<dbReference type="Gene3D" id="1.10.287.110">
    <property type="entry name" value="DnaJ domain"/>
    <property type="match status" value="1"/>
</dbReference>
<dbReference type="Gene3D" id="1.20.5.460">
    <property type="entry name" value="Single helix bin"/>
    <property type="match status" value="1"/>
</dbReference>
<dbReference type="Gene3D" id="2.60.260.20">
    <property type="entry name" value="Urease metallochaperone UreE, N-terminal domain"/>
    <property type="match status" value="2"/>
</dbReference>
<dbReference type="HAMAP" id="MF_01154">
    <property type="entry name" value="CbpA"/>
    <property type="match status" value="1"/>
</dbReference>
<dbReference type="InterPro" id="IPR023859">
    <property type="entry name" value="DNA-bd_curved-DNA"/>
</dbReference>
<dbReference type="InterPro" id="IPR002939">
    <property type="entry name" value="DnaJ_C"/>
</dbReference>
<dbReference type="InterPro" id="IPR001623">
    <property type="entry name" value="DnaJ_domain"/>
</dbReference>
<dbReference type="InterPro" id="IPR018253">
    <property type="entry name" value="DnaJ_domain_CS"/>
</dbReference>
<dbReference type="InterPro" id="IPR008971">
    <property type="entry name" value="HSP40/DnaJ_pept-bd"/>
</dbReference>
<dbReference type="InterPro" id="IPR036869">
    <property type="entry name" value="J_dom_sf"/>
</dbReference>
<dbReference type="NCBIfam" id="NF007618">
    <property type="entry name" value="PRK10266.1"/>
    <property type="match status" value="1"/>
</dbReference>
<dbReference type="PANTHER" id="PTHR43096">
    <property type="entry name" value="DNAJ HOMOLOG 1, MITOCHONDRIAL-RELATED"/>
    <property type="match status" value="1"/>
</dbReference>
<dbReference type="PANTHER" id="PTHR43096:SF52">
    <property type="entry name" value="DNAJ HOMOLOG 1, MITOCHONDRIAL-RELATED"/>
    <property type="match status" value="1"/>
</dbReference>
<dbReference type="Pfam" id="PF00226">
    <property type="entry name" value="DnaJ"/>
    <property type="match status" value="1"/>
</dbReference>
<dbReference type="Pfam" id="PF01556">
    <property type="entry name" value="DnaJ_C"/>
    <property type="match status" value="1"/>
</dbReference>
<dbReference type="PRINTS" id="PR00625">
    <property type="entry name" value="JDOMAIN"/>
</dbReference>
<dbReference type="SMART" id="SM00271">
    <property type="entry name" value="DnaJ"/>
    <property type="match status" value="1"/>
</dbReference>
<dbReference type="SUPFAM" id="SSF46565">
    <property type="entry name" value="Chaperone J-domain"/>
    <property type="match status" value="1"/>
</dbReference>
<dbReference type="SUPFAM" id="SSF49493">
    <property type="entry name" value="HSP40/DnaJ peptide-binding domain"/>
    <property type="match status" value="2"/>
</dbReference>
<dbReference type="PROSITE" id="PS00636">
    <property type="entry name" value="DNAJ_1"/>
    <property type="match status" value="1"/>
</dbReference>
<dbReference type="PROSITE" id="PS50076">
    <property type="entry name" value="DNAJ_2"/>
    <property type="match status" value="1"/>
</dbReference>
<proteinExistence type="inferred from homology"/>
<gene>
    <name evidence="1" type="primary">cbpA</name>
    <name type="ordered locus">SSPA1615</name>
</gene>
<name>CBPA_SALPK</name>
<comment type="function">
    <text evidence="1">DNA-binding protein that preferentially recognizes a curved DNA sequence. It is probably a functional analog of DnaJ; displays overlapping activities with DnaJ, but functions under different conditions, probably acting as a molecular chaperone in an adaptive response to environmental stresses other than heat shock. Lacks autonomous chaperone activity; binds native substrates and targets them for recognition by DnaK. Its activity is inhibited by the binding of CbpM.</text>
</comment>
<comment type="subcellular location">
    <subcellularLocation>
        <location evidence="1">Cytoplasm</location>
        <location evidence="1">Nucleoid</location>
    </subcellularLocation>
</comment>
<protein>
    <recommendedName>
        <fullName evidence="1">Curved DNA-binding protein</fullName>
    </recommendedName>
</protein>
<keyword id="KW-0143">Chaperone</keyword>
<keyword id="KW-0963">Cytoplasm</keyword>
<keyword id="KW-0238">DNA-binding</keyword>
<organism>
    <name type="scientific">Salmonella paratyphi A (strain AKU_12601)</name>
    <dbReference type="NCBI Taxonomy" id="554290"/>
    <lineage>
        <taxon>Bacteria</taxon>
        <taxon>Pseudomonadati</taxon>
        <taxon>Pseudomonadota</taxon>
        <taxon>Gammaproteobacteria</taxon>
        <taxon>Enterobacterales</taxon>
        <taxon>Enterobacteriaceae</taxon>
        <taxon>Salmonella</taxon>
    </lineage>
</organism>
<evidence type="ECO:0000255" key="1">
    <source>
        <dbReference type="HAMAP-Rule" id="MF_01154"/>
    </source>
</evidence>
<feature type="chain" id="PRO_1000137761" description="Curved DNA-binding protein">
    <location>
        <begin position="1"/>
        <end position="306"/>
    </location>
</feature>
<feature type="domain" description="J" evidence="1">
    <location>
        <begin position="5"/>
        <end position="69"/>
    </location>
</feature>
<accession>B5BBH2</accession>
<reference key="1">
    <citation type="journal article" date="2009" name="BMC Genomics">
        <title>Pseudogene accumulation in the evolutionary histories of Salmonella enterica serovars Paratyphi A and Typhi.</title>
        <authorList>
            <person name="Holt K.E."/>
            <person name="Thomson N.R."/>
            <person name="Wain J."/>
            <person name="Langridge G.C."/>
            <person name="Hasan R."/>
            <person name="Bhutta Z.A."/>
            <person name="Quail M.A."/>
            <person name="Norbertczak H."/>
            <person name="Walker D."/>
            <person name="Simmonds M."/>
            <person name="White B."/>
            <person name="Bason N."/>
            <person name="Mungall K."/>
            <person name="Dougan G."/>
            <person name="Parkhill J."/>
        </authorList>
    </citation>
    <scope>NUCLEOTIDE SEQUENCE [LARGE SCALE GENOMIC DNA]</scope>
    <source>
        <strain>AKU_12601</strain>
    </source>
</reference>